<gene>
    <name evidence="1" type="primary">rpsU</name>
    <name type="ordered locus">lpg2358</name>
</gene>
<accession>Q5ZT07</accession>
<dbReference type="EMBL" id="AE017354">
    <property type="protein sequence ID" value="AAU28420.1"/>
    <property type="molecule type" value="Genomic_DNA"/>
</dbReference>
<dbReference type="RefSeq" id="WP_010948064.1">
    <property type="nucleotide sequence ID" value="NC_002942.5"/>
</dbReference>
<dbReference type="RefSeq" id="YP_096367.1">
    <property type="nucleotide sequence ID" value="NC_002942.5"/>
</dbReference>
<dbReference type="SMR" id="Q5ZT07"/>
<dbReference type="STRING" id="272624.lpg2358"/>
<dbReference type="PaxDb" id="272624-lpg2358"/>
<dbReference type="GeneID" id="57036351"/>
<dbReference type="KEGG" id="lpn:lpg2358"/>
<dbReference type="PATRIC" id="fig|272624.6.peg.2480"/>
<dbReference type="eggNOG" id="COG0828">
    <property type="taxonomic scope" value="Bacteria"/>
</dbReference>
<dbReference type="HOGENOM" id="CLU_159258_1_0_6"/>
<dbReference type="OrthoDB" id="9799244at2"/>
<dbReference type="Proteomes" id="UP000000609">
    <property type="component" value="Chromosome"/>
</dbReference>
<dbReference type="GO" id="GO:1990904">
    <property type="term" value="C:ribonucleoprotein complex"/>
    <property type="evidence" value="ECO:0007669"/>
    <property type="project" value="UniProtKB-KW"/>
</dbReference>
<dbReference type="GO" id="GO:0005840">
    <property type="term" value="C:ribosome"/>
    <property type="evidence" value="ECO:0007669"/>
    <property type="project" value="UniProtKB-KW"/>
</dbReference>
<dbReference type="GO" id="GO:0003735">
    <property type="term" value="F:structural constituent of ribosome"/>
    <property type="evidence" value="ECO:0007669"/>
    <property type="project" value="InterPro"/>
</dbReference>
<dbReference type="GO" id="GO:0006412">
    <property type="term" value="P:translation"/>
    <property type="evidence" value="ECO:0007669"/>
    <property type="project" value="UniProtKB-UniRule"/>
</dbReference>
<dbReference type="Gene3D" id="1.20.5.1150">
    <property type="entry name" value="Ribosomal protein S8"/>
    <property type="match status" value="1"/>
</dbReference>
<dbReference type="HAMAP" id="MF_00358">
    <property type="entry name" value="Ribosomal_bS21"/>
    <property type="match status" value="1"/>
</dbReference>
<dbReference type="InterPro" id="IPR001911">
    <property type="entry name" value="Ribosomal_bS21"/>
</dbReference>
<dbReference type="InterPro" id="IPR018278">
    <property type="entry name" value="Ribosomal_bS21_CS"/>
</dbReference>
<dbReference type="InterPro" id="IPR038380">
    <property type="entry name" value="Ribosomal_bS21_sf"/>
</dbReference>
<dbReference type="NCBIfam" id="TIGR00030">
    <property type="entry name" value="S21p"/>
    <property type="match status" value="1"/>
</dbReference>
<dbReference type="PANTHER" id="PTHR21109">
    <property type="entry name" value="MITOCHONDRIAL 28S RIBOSOMAL PROTEIN S21"/>
    <property type="match status" value="1"/>
</dbReference>
<dbReference type="PANTHER" id="PTHR21109:SF22">
    <property type="entry name" value="SMALL RIBOSOMAL SUBUNIT PROTEIN BS21"/>
    <property type="match status" value="1"/>
</dbReference>
<dbReference type="Pfam" id="PF01165">
    <property type="entry name" value="Ribosomal_S21"/>
    <property type="match status" value="1"/>
</dbReference>
<dbReference type="PRINTS" id="PR00976">
    <property type="entry name" value="RIBOSOMALS21"/>
</dbReference>
<dbReference type="PROSITE" id="PS01181">
    <property type="entry name" value="RIBOSOMAL_S21"/>
    <property type="match status" value="1"/>
</dbReference>
<protein>
    <recommendedName>
        <fullName evidence="1">Small ribosomal subunit protein bS21</fullName>
    </recommendedName>
    <alternativeName>
        <fullName evidence="3">30S ribosomal protein S21</fullName>
    </alternativeName>
</protein>
<comment type="similarity">
    <text evidence="1">Belongs to the bacterial ribosomal protein bS21 family.</text>
</comment>
<evidence type="ECO:0000255" key="1">
    <source>
        <dbReference type="HAMAP-Rule" id="MF_00358"/>
    </source>
</evidence>
<evidence type="ECO:0000256" key="2">
    <source>
        <dbReference type="SAM" id="MobiDB-lite"/>
    </source>
</evidence>
<evidence type="ECO:0000305" key="3"/>
<name>RS21_LEGPH</name>
<sequence length="79" mass="9352">MPTVRVKEGENPEYALRRFKRSCEKAGILTELRRREFYEKPTAERKRKQAAAVKRHLKKISRDVSSRRGVGHRRKKSTT</sequence>
<feature type="chain" id="PRO_0000266699" description="Small ribosomal subunit protein bS21">
    <location>
        <begin position="1"/>
        <end position="79"/>
    </location>
</feature>
<feature type="region of interest" description="Disordered" evidence="2">
    <location>
        <begin position="47"/>
        <end position="79"/>
    </location>
</feature>
<feature type="compositionally biased region" description="Basic residues" evidence="2">
    <location>
        <begin position="47"/>
        <end position="59"/>
    </location>
</feature>
<feature type="compositionally biased region" description="Basic residues" evidence="2">
    <location>
        <begin position="69"/>
        <end position="79"/>
    </location>
</feature>
<organism>
    <name type="scientific">Legionella pneumophila subsp. pneumophila (strain Philadelphia 1 / ATCC 33152 / DSM 7513)</name>
    <dbReference type="NCBI Taxonomy" id="272624"/>
    <lineage>
        <taxon>Bacteria</taxon>
        <taxon>Pseudomonadati</taxon>
        <taxon>Pseudomonadota</taxon>
        <taxon>Gammaproteobacteria</taxon>
        <taxon>Legionellales</taxon>
        <taxon>Legionellaceae</taxon>
        <taxon>Legionella</taxon>
    </lineage>
</organism>
<keyword id="KW-1185">Reference proteome</keyword>
<keyword id="KW-0687">Ribonucleoprotein</keyword>
<keyword id="KW-0689">Ribosomal protein</keyword>
<proteinExistence type="inferred from homology"/>
<reference key="1">
    <citation type="journal article" date="2004" name="Science">
        <title>The genomic sequence of the accidental pathogen Legionella pneumophila.</title>
        <authorList>
            <person name="Chien M."/>
            <person name="Morozova I."/>
            <person name="Shi S."/>
            <person name="Sheng H."/>
            <person name="Chen J."/>
            <person name="Gomez S.M."/>
            <person name="Asamani G."/>
            <person name="Hill K."/>
            <person name="Nuara J."/>
            <person name="Feder M."/>
            <person name="Rineer J."/>
            <person name="Greenberg J.J."/>
            <person name="Steshenko V."/>
            <person name="Park S.H."/>
            <person name="Zhao B."/>
            <person name="Teplitskaya E."/>
            <person name="Edwards J.R."/>
            <person name="Pampou S."/>
            <person name="Georghiou A."/>
            <person name="Chou I.-C."/>
            <person name="Iannuccilli W."/>
            <person name="Ulz M.E."/>
            <person name="Kim D.H."/>
            <person name="Geringer-Sameth A."/>
            <person name="Goldsberry C."/>
            <person name="Morozov P."/>
            <person name="Fischer S.G."/>
            <person name="Segal G."/>
            <person name="Qu X."/>
            <person name="Rzhetsky A."/>
            <person name="Zhang P."/>
            <person name="Cayanis E."/>
            <person name="De Jong P.J."/>
            <person name="Ju J."/>
            <person name="Kalachikov S."/>
            <person name="Shuman H.A."/>
            <person name="Russo J.J."/>
        </authorList>
    </citation>
    <scope>NUCLEOTIDE SEQUENCE [LARGE SCALE GENOMIC DNA]</scope>
    <source>
        <strain>Philadelphia 1 / ATCC 33152 / DSM 7513</strain>
    </source>
</reference>